<dbReference type="EC" id="3.4.11.1" evidence="1"/>
<dbReference type="EC" id="3.4.11.10" evidence="1"/>
<dbReference type="EMBL" id="CP000947">
    <property type="protein sequence ID" value="ACA31535.1"/>
    <property type="molecule type" value="Genomic_DNA"/>
</dbReference>
<dbReference type="RefSeq" id="WP_012340864.1">
    <property type="nucleotide sequence ID" value="NC_010519.1"/>
</dbReference>
<dbReference type="SMR" id="B0UVX4"/>
<dbReference type="STRING" id="228400.HSM_1755"/>
<dbReference type="MEROPS" id="M17.003"/>
<dbReference type="GeneID" id="31488062"/>
<dbReference type="KEGG" id="hsm:HSM_1755"/>
<dbReference type="HOGENOM" id="CLU_013734_0_0_6"/>
<dbReference type="GO" id="GO:0005737">
    <property type="term" value="C:cytoplasm"/>
    <property type="evidence" value="ECO:0007669"/>
    <property type="project" value="UniProtKB-SubCell"/>
</dbReference>
<dbReference type="GO" id="GO:0030145">
    <property type="term" value="F:manganese ion binding"/>
    <property type="evidence" value="ECO:0007669"/>
    <property type="project" value="UniProtKB-UniRule"/>
</dbReference>
<dbReference type="GO" id="GO:0070006">
    <property type="term" value="F:metalloaminopeptidase activity"/>
    <property type="evidence" value="ECO:0007669"/>
    <property type="project" value="InterPro"/>
</dbReference>
<dbReference type="GO" id="GO:0006508">
    <property type="term" value="P:proteolysis"/>
    <property type="evidence" value="ECO:0007669"/>
    <property type="project" value="UniProtKB-KW"/>
</dbReference>
<dbReference type="CDD" id="cd00433">
    <property type="entry name" value="Peptidase_M17"/>
    <property type="match status" value="1"/>
</dbReference>
<dbReference type="FunFam" id="3.40.630.10:FF:000004">
    <property type="entry name" value="Probable cytosol aminopeptidase"/>
    <property type="match status" value="1"/>
</dbReference>
<dbReference type="Gene3D" id="3.40.220.10">
    <property type="entry name" value="Leucine Aminopeptidase, subunit E, domain 1"/>
    <property type="match status" value="1"/>
</dbReference>
<dbReference type="Gene3D" id="3.40.630.10">
    <property type="entry name" value="Zn peptidases"/>
    <property type="match status" value="1"/>
</dbReference>
<dbReference type="HAMAP" id="MF_00181">
    <property type="entry name" value="Cytosol_peptidase_M17"/>
    <property type="match status" value="1"/>
</dbReference>
<dbReference type="InterPro" id="IPR011356">
    <property type="entry name" value="Leucine_aapep/pepB"/>
</dbReference>
<dbReference type="InterPro" id="IPR043472">
    <property type="entry name" value="Macro_dom-like"/>
</dbReference>
<dbReference type="InterPro" id="IPR000819">
    <property type="entry name" value="Peptidase_M17_C"/>
</dbReference>
<dbReference type="InterPro" id="IPR023042">
    <property type="entry name" value="Peptidase_M17_leu_NH2_pept"/>
</dbReference>
<dbReference type="InterPro" id="IPR008283">
    <property type="entry name" value="Peptidase_M17_N"/>
</dbReference>
<dbReference type="NCBIfam" id="NF002073">
    <property type="entry name" value="PRK00913.1-2"/>
    <property type="match status" value="1"/>
</dbReference>
<dbReference type="NCBIfam" id="NF002074">
    <property type="entry name" value="PRK00913.1-4"/>
    <property type="match status" value="1"/>
</dbReference>
<dbReference type="PANTHER" id="PTHR11963:SF23">
    <property type="entry name" value="CYTOSOL AMINOPEPTIDASE"/>
    <property type="match status" value="1"/>
</dbReference>
<dbReference type="PANTHER" id="PTHR11963">
    <property type="entry name" value="LEUCINE AMINOPEPTIDASE-RELATED"/>
    <property type="match status" value="1"/>
</dbReference>
<dbReference type="Pfam" id="PF00883">
    <property type="entry name" value="Peptidase_M17"/>
    <property type="match status" value="1"/>
</dbReference>
<dbReference type="Pfam" id="PF02789">
    <property type="entry name" value="Peptidase_M17_N"/>
    <property type="match status" value="1"/>
</dbReference>
<dbReference type="PRINTS" id="PR00481">
    <property type="entry name" value="LAMNOPPTDASE"/>
</dbReference>
<dbReference type="SUPFAM" id="SSF52949">
    <property type="entry name" value="Macro domain-like"/>
    <property type="match status" value="1"/>
</dbReference>
<dbReference type="SUPFAM" id="SSF53187">
    <property type="entry name" value="Zn-dependent exopeptidases"/>
    <property type="match status" value="1"/>
</dbReference>
<dbReference type="PROSITE" id="PS00631">
    <property type="entry name" value="CYTOSOL_AP"/>
    <property type="match status" value="1"/>
</dbReference>
<gene>
    <name evidence="1" type="primary">pepA</name>
    <name type="ordered locus">HSM_1755</name>
</gene>
<sequence length="495" mass="54115">MKYSAKNTALSQIDSNIILAVFEDGELSPTAMQFDQLSQGYLTRLIQVGEVSGKQGQVLILRDIPNCQAQRIFIVGCGKKDKITERQYKQIIQKTIQTILETQASEVVSFLNEIELKNRDIHWNIRFAIETIEASHYQFDTFKSKKTDASLVLDRFIFNVPTELQQNALQAISYAQAIALGVKYAKDIANCPPNVCNPTYLAEQAQSLAKHSNLINVQVLGEKEMAELNMFSYLAVSQGSANEAKMSVIEYRNHPDKNAKPIVLVGKGLTFDAGGISLKPADSMDEMKYDMCGAASVFGVMYALATLQLPLNVIGVLAGCENLPDGNSYRPGDILTTMSGLTVEVLNTDAEGRLVLCDALTYVERFNPELVIDVATLTGACVVALGQHNSGLIATDGKLAEKLLNAAEETTDKAWRLPLSEEYQEQLKSNFADLANIGGRWGGAITAGAFLANFTKNYPWAHLDIAGTAWLQGTNKGATGRPVSLLTQFLINQSK</sequence>
<organism>
    <name type="scientific">Histophilus somni (strain 2336)</name>
    <name type="common">Haemophilus somnus</name>
    <dbReference type="NCBI Taxonomy" id="228400"/>
    <lineage>
        <taxon>Bacteria</taxon>
        <taxon>Pseudomonadati</taxon>
        <taxon>Pseudomonadota</taxon>
        <taxon>Gammaproteobacteria</taxon>
        <taxon>Pasteurellales</taxon>
        <taxon>Pasteurellaceae</taxon>
        <taxon>Histophilus</taxon>
    </lineage>
</organism>
<evidence type="ECO:0000255" key="1">
    <source>
        <dbReference type="HAMAP-Rule" id="MF_00181"/>
    </source>
</evidence>
<comment type="function">
    <text evidence="1">Presumably involved in the processing and regular turnover of intracellular proteins. Catalyzes the removal of unsubstituted N-terminal amino acids from various peptides.</text>
</comment>
<comment type="catalytic activity">
    <reaction evidence="1">
        <text>Release of an N-terminal amino acid, Xaa-|-Yaa-, in which Xaa is preferably Leu, but may be other amino acids including Pro although not Arg or Lys, and Yaa may be Pro. Amino acid amides and methyl esters are also readily hydrolyzed, but rates on arylamides are exceedingly low.</text>
        <dbReference type="EC" id="3.4.11.1"/>
    </reaction>
</comment>
<comment type="catalytic activity">
    <reaction evidence="1">
        <text>Release of an N-terminal amino acid, preferentially leucine, but not glutamic or aspartic acids.</text>
        <dbReference type="EC" id="3.4.11.10"/>
    </reaction>
</comment>
<comment type="cofactor">
    <cofactor evidence="1">
        <name>Mn(2+)</name>
        <dbReference type="ChEBI" id="CHEBI:29035"/>
    </cofactor>
    <text evidence="1">Binds 2 manganese ions per subunit.</text>
</comment>
<comment type="subcellular location">
    <subcellularLocation>
        <location evidence="1">Cytoplasm</location>
    </subcellularLocation>
</comment>
<comment type="similarity">
    <text evidence="1">Belongs to the peptidase M17 family.</text>
</comment>
<reference key="1">
    <citation type="submission" date="2008-02" db="EMBL/GenBank/DDBJ databases">
        <title>Complete sequence of Haemophilus somnus 2336.</title>
        <authorList>
            <consortium name="US DOE Joint Genome Institute"/>
            <person name="Siddaramappa S."/>
            <person name="Duncan A.J."/>
            <person name="Challacombe J.F."/>
            <person name="Rainey D."/>
            <person name="Gillaspy A.F."/>
            <person name="Carson M."/>
            <person name="Gipson J."/>
            <person name="Gipson M."/>
            <person name="Bruce D."/>
            <person name="Detter J.C."/>
            <person name="Han C.S."/>
            <person name="Land M."/>
            <person name="Tapia R."/>
            <person name="Thompson L.S."/>
            <person name="Orvis J."/>
            <person name="Zaitshik J."/>
            <person name="Barnes G."/>
            <person name="Brettin T.S."/>
            <person name="Dyer D.W."/>
            <person name="Inzana T.J."/>
        </authorList>
    </citation>
    <scope>NUCLEOTIDE SEQUENCE [LARGE SCALE GENOMIC DNA]</scope>
    <source>
        <strain>2336</strain>
    </source>
</reference>
<protein>
    <recommendedName>
        <fullName evidence="1">Probable cytosol aminopeptidase</fullName>
        <ecNumber evidence="1">3.4.11.1</ecNumber>
    </recommendedName>
    <alternativeName>
        <fullName evidence="1">Leucine aminopeptidase</fullName>
        <shortName evidence="1">LAP</shortName>
        <ecNumber evidence="1">3.4.11.10</ecNumber>
    </alternativeName>
    <alternativeName>
        <fullName evidence="1">Leucyl aminopeptidase</fullName>
    </alternativeName>
</protein>
<name>AMPA_HISS2</name>
<accession>B0UVX4</accession>
<feature type="chain" id="PRO_1000077277" description="Probable cytosol aminopeptidase">
    <location>
        <begin position="1"/>
        <end position="495"/>
    </location>
</feature>
<feature type="active site" evidence="1">
    <location>
        <position position="279"/>
    </location>
</feature>
<feature type="active site" evidence="1">
    <location>
        <position position="353"/>
    </location>
</feature>
<feature type="binding site" evidence="1">
    <location>
        <position position="267"/>
    </location>
    <ligand>
        <name>Mn(2+)</name>
        <dbReference type="ChEBI" id="CHEBI:29035"/>
        <label>2</label>
    </ligand>
</feature>
<feature type="binding site" evidence="1">
    <location>
        <position position="272"/>
    </location>
    <ligand>
        <name>Mn(2+)</name>
        <dbReference type="ChEBI" id="CHEBI:29035"/>
        <label>1</label>
    </ligand>
</feature>
<feature type="binding site" evidence="1">
    <location>
        <position position="272"/>
    </location>
    <ligand>
        <name>Mn(2+)</name>
        <dbReference type="ChEBI" id="CHEBI:29035"/>
        <label>2</label>
    </ligand>
</feature>
<feature type="binding site" evidence="1">
    <location>
        <position position="290"/>
    </location>
    <ligand>
        <name>Mn(2+)</name>
        <dbReference type="ChEBI" id="CHEBI:29035"/>
        <label>2</label>
    </ligand>
</feature>
<feature type="binding site" evidence="1">
    <location>
        <position position="349"/>
    </location>
    <ligand>
        <name>Mn(2+)</name>
        <dbReference type="ChEBI" id="CHEBI:29035"/>
        <label>1</label>
    </ligand>
</feature>
<feature type="binding site" evidence="1">
    <location>
        <position position="351"/>
    </location>
    <ligand>
        <name>Mn(2+)</name>
        <dbReference type="ChEBI" id="CHEBI:29035"/>
        <label>1</label>
    </ligand>
</feature>
<feature type="binding site" evidence="1">
    <location>
        <position position="351"/>
    </location>
    <ligand>
        <name>Mn(2+)</name>
        <dbReference type="ChEBI" id="CHEBI:29035"/>
        <label>2</label>
    </ligand>
</feature>
<keyword id="KW-0031">Aminopeptidase</keyword>
<keyword id="KW-0963">Cytoplasm</keyword>
<keyword id="KW-0378">Hydrolase</keyword>
<keyword id="KW-0464">Manganese</keyword>
<keyword id="KW-0479">Metal-binding</keyword>
<keyword id="KW-0645">Protease</keyword>
<proteinExistence type="inferred from homology"/>